<feature type="chain" id="PRO_0000150086" description="Hdr-like menaquinol oxidoreductase cytochrome b-like subunit">
    <location>
        <begin position="1"/>
        <end position="336"/>
    </location>
</feature>
<feature type="transmembrane region" description="Helical" evidence="1">
    <location>
        <begin position="4"/>
        <end position="24"/>
    </location>
</feature>
<feature type="transmembrane region" description="Helical" evidence="1">
    <location>
        <begin position="60"/>
        <end position="80"/>
    </location>
</feature>
<feature type="transmembrane region" description="Helical" evidence="1">
    <location>
        <begin position="102"/>
        <end position="122"/>
    </location>
</feature>
<feature type="transmembrane region" description="Helical" evidence="1">
    <location>
        <begin position="145"/>
        <end position="165"/>
    </location>
</feature>
<feature type="transmembrane region" description="Helical" evidence="1">
    <location>
        <begin position="184"/>
        <end position="204"/>
    </location>
</feature>
<feature type="transmembrane region" description="Helical" evidence="1">
    <location>
        <begin position="232"/>
        <end position="252"/>
    </location>
</feature>
<feature type="sequence conflict" description="In Ref. 2; AA sequence." evidence="3" ref="2">
    <original>S</original>
    <variation>L</variation>
    <location>
        <position position="2"/>
    </location>
</feature>
<protein>
    <recommendedName>
        <fullName>Hdr-like menaquinol oxidoreductase cytochrome b-like subunit</fullName>
        <shortName>Hme subunit C</shortName>
    </recommendedName>
</protein>
<comment type="function">
    <text evidence="2">Has menaquinol-oxidizing activity. The HmeC and HmeD subunits may together mediate electron transfer from menaquinol to an unidentified electron acceptor on the cytoplasmic side of the membrane.</text>
</comment>
<comment type="subcellular location">
    <subcellularLocation>
        <location evidence="2">Cell membrane</location>
        <topology evidence="2">Multi-pass membrane protein</topology>
    </subcellularLocation>
</comment>
<evidence type="ECO:0000255" key="1"/>
<evidence type="ECO:0000269" key="2">
    <source>
    </source>
</evidence>
<evidence type="ECO:0000305" key="3"/>
<dbReference type="EMBL" id="CP001857">
    <property type="protein sequence ID" value="ADB58774.1"/>
    <property type="molecule type" value="Genomic_DNA"/>
</dbReference>
<dbReference type="RefSeq" id="WP_012941109.1">
    <property type="nucleotide sequence ID" value="NC_013741.1"/>
</dbReference>
<dbReference type="STRING" id="572546.Arcpr_1729"/>
<dbReference type="PaxDb" id="572546-Arcpr_1729"/>
<dbReference type="GeneID" id="8740423"/>
<dbReference type="KEGG" id="apo:Arcpr_1729"/>
<dbReference type="eggNOG" id="arCOG02194">
    <property type="taxonomic scope" value="Archaea"/>
</dbReference>
<dbReference type="HOGENOM" id="CLU_067516_0_0_2"/>
<dbReference type="OrthoDB" id="50403at2157"/>
<dbReference type="Proteomes" id="UP000001901">
    <property type="component" value="Chromosome"/>
</dbReference>
<dbReference type="GO" id="GO:0005886">
    <property type="term" value="C:plasma membrane"/>
    <property type="evidence" value="ECO:0007669"/>
    <property type="project" value="UniProtKB-SubCell"/>
</dbReference>
<dbReference type="GO" id="GO:0009055">
    <property type="term" value="F:electron transfer activity"/>
    <property type="evidence" value="ECO:0007669"/>
    <property type="project" value="TreeGrafter"/>
</dbReference>
<dbReference type="GO" id="GO:0020037">
    <property type="term" value="F:heme binding"/>
    <property type="evidence" value="ECO:0007669"/>
    <property type="project" value="TreeGrafter"/>
</dbReference>
<dbReference type="GO" id="GO:0008940">
    <property type="term" value="F:nitrate reductase activity"/>
    <property type="evidence" value="ECO:0007669"/>
    <property type="project" value="TreeGrafter"/>
</dbReference>
<dbReference type="GO" id="GO:0019645">
    <property type="term" value="P:anaerobic electron transport chain"/>
    <property type="evidence" value="ECO:0007669"/>
    <property type="project" value="TreeGrafter"/>
</dbReference>
<dbReference type="Gene3D" id="1.20.950.20">
    <property type="entry name" value="Transmembrane di-heme cytochromes, Chain C"/>
    <property type="match status" value="1"/>
</dbReference>
<dbReference type="InterPro" id="IPR047660">
    <property type="entry name" value="DsrM"/>
</dbReference>
<dbReference type="InterPro" id="IPR051936">
    <property type="entry name" value="Heme-iron_electron_transfer"/>
</dbReference>
<dbReference type="InterPro" id="IPR023234">
    <property type="entry name" value="NarG-like_domain"/>
</dbReference>
<dbReference type="InterPro" id="IPR036197">
    <property type="entry name" value="NarG-like_sf"/>
</dbReference>
<dbReference type="NCBIfam" id="NF038037">
    <property type="entry name" value="cytob_DsrM"/>
    <property type="match status" value="1"/>
</dbReference>
<dbReference type="PANTHER" id="PTHR30598">
    <property type="entry name" value="NITRATE REDUCTASE PRIVATE CHAPERONE, REDOX ENZYME MATURATION PROTEIN REMP FAMILY"/>
    <property type="match status" value="1"/>
</dbReference>
<dbReference type="PANTHER" id="PTHR30598:SF3">
    <property type="entry name" value="RESPIRATORY NITRATE REDUCTASE 1 GAMMA CHAIN"/>
    <property type="match status" value="1"/>
</dbReference>
<dbReference type="Pfam" id="PF02665">
    <property type="entry name" value="Nitrate_red_gam"/>
    <property type="match status" value="1"/>
</dbReference>
<dbReference type="SUPFAM" id="SSF103501">
    <property type="entry name" value="Respiratory nitrate reductase 1 gamma chain"/>
    <property type="match status" value="1"/>
</dbReference>
<reference key="1">
    <citation type="journal article" date="2010" name="Stand. Genomic Sci.">
        <title>Complete genome sequence of Archaeoglobus profundus type strain (AV18).</title>
        <authorList>
            <person name="von Jan M."/>
            <person name="Lapidus A."/>
            <person name="Del Rio T.G."/>
            <person name="Copeland A."/>
            <person name="Tice H."/>
            <person name="Cheng J.F."/>
            <person name="Lucas S."/>
            <person name="Chen F."/>
            <person name="Nolan M."/>
            <person name="Goodwin L."/>
            <person name="Han C."/>
            <person name="Pitluck S."/>
            <person name="Liolios K."/>
            <person name="Ivanova N."/>
            <person name="Mavromatis K."/>
            <person name="Ovchinnikova G."/>
            <person name="Chertkov O."/>
            <person name="Pati A."/>
            <person name="Chen A."/>
            <person name="Palaniappan K."/>
            <person name="Land M."/>
            <person name="Hauser L."/>
            <person name="Chang Y.J."/>
            <person name="Jeffries C.D."/>
            <person name="Saunders E."/>
            <person name="Brettin T."/>
            <person name="Detter J.C."/>
            <person name="Chain P."/>
            <person name="Eichinger K."/>
            <person name="Huber H."/>
            <person name="Spring S."/>
            <person name="Rohde M."/>
            <person name="Goker M."/>
            <person name="Wirth R."/>
            <person name="Woyke T."/>
            <person name="Bristow J."/>
            <person name="Eisen J.A."/>
            <person name="Markowitz V."/>
            <person name="Hugenholtz P."/>
            <person name="Kyrpides N.C."/>
            <person name="Klenk H.P."/>
        </authorList>
    </citation>
    <scope>NUCLEOTIDE SEQUENCE [LARGE SCALE GENOMIC DNA]</scope>
    <source>
        <strain>DSM 5631 / JCM 9629 / NBRC 100127 / Av18</strain>
    </source>
</reference>
<reference evidence="3" key="2">
    <citation type="journal article" date="2004" name="Eur. J. Biochem.">
        <title>Two distinct heterodisulfide reductase-like enzymes in the sulfate-reducing archaeon Archaeoglobus profundus.</title>
        <authorList>
            <person name="Mander G.J."/>
            <person name="Pierik A.J."/>
            <person name="Huber H."/>
            <person name="Hedderich R."/>
        </authorList>
    </citation>
    <scope>PROTEIN SEQUENCE OF 2-21</scope>
    <scope>FUNCTION</scope>
    <scope>SUBCELLULAR LOCATION</scope>
</reference>
<organism>
    <name type="scientific">Archaeoglobus profundus (strain DSM 5631 / JCM 9629 / NBRC 100127 / Av18)</name>
    <dbReference type="NCBI Taxonomy" id="572546"/>
    <lineage>
        <taxon>Archaea</taxon>
        <taxon>Methanobacteriati</taxon>
        <taxon>Methanobacteriota</taxon>
        <taxon>Archaeoglobi</taxon>
        <taxon>Archaeoglobales</taxon>
        <taxon>Archaeoglobaceae</taxon>
        <taxon>Archaeoglobus</taxon>
    </lineage>
</organism>
<sequence length="336" mass="39268">MSEALYIFYALPYICFAIFVIGTIYRVVDWARSAVPLKIPTTSAQQPSFKFVRRTWIDKIDSPSSKFWAFVRVLFVVFLFRDLFRNTRYYIEMGGKNVDTRWLWLFAILFHYSLLVIVIRHLRFFTNPVPDFVKTLEYLDGVLGVAIVPPLLMTGVIALVALAFLWGRRILLAKERSISIPSDHLILFFMAVILVSGLLMRYIIKADLSYVKMFALSVVTFQPPSPEVLANLHWLFLIHFTFVCITIAYIPFSKVMHFAGVWFSPTRNMPNDNRRKRHVNPWDPNPELPILVREGITVAGVTYKCKKLDWDTYYEMYKDQLDEIAEKNYTLKAEEF</sequence>
<name>HMEC_ARCPA</name>
<gene>
    <name type="primary">hmeC</name>
    <name type="ordered locus">Arcpr_1729</name>
</gene>
<proteinExistence type="evidence at protein level"/>
<accession>P84628</accession>
<accession>D2RF80</accession>
<keyword id="KW-1003">Cell membrane</keyword>
<keyword id="KW-0903">Direct protein sequencing</keyword>
<keyword id="KW-0249">Electron transport</keyword>
<keyword id="KW-0472">Membrane</keyword>
<keyword id="KW-0560">Oxidoreductase</keyword>
<keyword id="KW-1185">Reference proteome</keyword>
<keyword id="KW-0812">Transmembrane</keyword>
<keyword id="KW-1133">Transmembrane helix</keyword>
<keyword id="KW-0813">Transport</keyword>